<sequence>MFPHEEKLIKERLGREPNEVEKAMLEVMWSEHASYKSSRKWLKLLPTENEHVILGPGEDAGVVKFDDNTAIVVGIESHNHPSAVEPYGGAATGVGGIVRDILCMGARPIALLDPIRFGPLGKERNRYLFEYVVKGIADYGNRIGVPTVGGETEFDESLDNYTLVNVACIGLMRPEELVHSYVEESGLLLVLVGNKTGRDGIHGVTFASEELSENAEEEDRSAVQIPDPFTEKLLIEATLEAVHTGKVKALKDLGGGGLTCASSEMAGKKGFGAVIYADRVPQREPNMNPMEIMISESQERMLFAVRKEDLNEITKIFEKYDLEWTVVGETIEEPRYIVYWNDEKIADLPIDLLADVPIIEWEAKSYDIEKDVQTPEISIEEALLEVLSSPNIVSKAWIWQQYDHEVQGRTVLKPGLDATVLKINDEHGLAFVSDGNPSYSHLNPYHGAMSAVAEVVRNLASVGARPLALVDNLNFASPERPEVYWSFIETIKGLADAAKAFGLAYVSGNVSFYNEVGKKPIKPTPVVAGLGKVKLENITTMDFKDKGDLIAVVGTTKKELGGSELYRIFGINKGIAPRVDLEREKQNVEGILKAIELKLVKAVHDVSKGGLAIALIEMAISGNKGFEVDIEKVPAEGGLSPLEVLFSESHGRFLISFEEKNLEKIKAIFDEFAVIGRVAEEMLIFKHENKEVINSDLRQVKALYNSLPSILGE</sequence>
<name>PURL_THESM</name>
<accession>C6A0I0</accession>
<proteinExistence type="inferred from homology"/>
<keyword id="KW-0067">ATP-binding</keyword>
<keyword id="KW-0963">Cytoplasm</keyword>
<keyword id="KW-0436">Ligase</keyword>
<keyword id="KW-0460">Magnesium</keyword>
<keyword id="KW-0479">Metal-binding</keyword>
<keyword id="KW-0547">Nucleotide-binding</keyword>
<keyword id="KW-0658">Purine biosynthesis</keyword>
<keyword id="KW-1185">Reference proteome</keyword>
<evidence type="ECO:0000255" key="1">
    <source>
        <dbReference type="HAMAP-Rule" id="MF_00420"/>
    </source>
</evidence>
<protein>
    <recommendedName>
        <fullName evidence="1">Phosphoribosylformylglycinamidine synthase subunit PurL</fullName>
        <shortName evidence="1">FGAM synthase</shortName>
        <ecNumber evidence="1">6.3.5.3</ecNumber>
    </recommendedName>
    <alternativeName>
        <fullName evidence="1">Formylglycinamide ribonucleotide amidotransferase subunit II</fullName>
        <shortName evidence="1">FGAR amidotransferase II</shortName>
        <shortName evidence="1">FGAR-AT II</shortName>
    </alternativeName>
    <alternativeName>
        <fullName evidence="1">Glutamine amidotransferase PurL</fullName>
    </alternativeName>
    <alternativeName>
        <fullName evidence="1">Phosphoribosylformylglycinamidine synthase subunit II</fullName>
    </alternativeName>
</protein>
<gene>
    <name evidence="1" type="primary">purL</name>
    <name type="ordered locus">TSIB_0056</name>
</gene>
<dbReference type="EC" id="6.3.5.3" evidence="1"/>
<dbReference type="EMBL" id="CP001463">
    <property type="protein sequence ID" value="ACS89125.1"/>
    <property type="molecule type" value="Genomic_DNA"/>
</dbReference>
<dbReference type="RefSeq" id="WP_012766086.1">
    <property type="nucleotide sequence ID" value="NC_012883.1"/>
</dbReference>
<dbReference type="SMR" id="C6A0I0"/>
<dbReference type="STRING" id="604354.TSIB_0056"/>
<dbReference type="GeneID" id="8095023"/>
<dbReference type="KEGG" id="tsi:TSIB_0056"/>
<dbReference type="eggNOG" id="arCOG00641">
    <property type="taxonomic scope" value="Archaea"/>
</dbReference>
<dbReference type="HOGENOM" id="CLU_003100_0_1_2"/>
<dbReference type="OrthoDB" id="8251at2157"/>
<dbReference type="UniPathway" id="UPA00074">
    <property type="reaction ID" value="UER00128"/>
</dbReference>
<dbReference type="Proteomes" id="UP000009079">
    <property type="component" value="Chromosome"/>
</dbReference>
<dbReference type="GO" id="GO:0005737">
    <property type="term" value="C:cytoplasm"/>
    <property type="evidence" value="ECO:0007669"/>
    <property type="project" value="UniProtKB-SubCell"/>
</dbReference>
<dbReference type="GO" id="GO:0005524">
    <property type="term" value="F:ATP binding"/>
    <property type="evidence" value="ECO:0007669"/>
    <property type="project" value="UniProtKB-UniRule"/>
</dbReference>
<dbReference type="GO" id="GO:0000287">
    <property type="term" value="F:magnesium ion binding"/>
    <property type="evidence" value="ECO:0007669"/>
    <property type="project" value="UniProtKB-UniRule"/>
</dbReference>
<dbReference type="GO" id="GO:0004642">
    <property type="term" value="F:phosphoribosylformylglycinamidine synthase activity"/>
    <property type="evidence" value="ECO:0007669"/>
    <property type="project" value="UniProtKB-UniRule"/>
</dbReference>
<dbReference type="GO" id="GO:0006189">
    <property type="term" value="P:'de novo' IMP biosynthetic process"/>
    <property type="evidence" value="ECO:0007669"/>
    <property type="project" value="UniProtKB-UniRule"/>
</dbReference>
<dbReference type="CDD" id="cd02203">
    <property type="entry name" value="PurL_repeat1"/>
    <property type="match status" value="1"/>
</dbReference>
<dbReference type="CDD" id="cd02204">
    <property type="entry name" value="PurL_repeat2"/>
    <property type="match status" value="1"/>
</dbReference>
<dbReference type="FunFam" id="3.30.1330.10:FF:000004">
    <property type="entry name" value="Phosphoribosylformylglycinamidine synthase subunit PurL"/>
    <property type="match status" value="1"/>
</dbReference>
<dbReference type="Gene3D" id="3.90.650.10">
    <property type="entry name" value="PurM-like C-terminal domain"/>
    <property type="match status" value="2"/>
</dbReference>
<dbReference type="Gene3D" id="3.30.1330.10">
    <property type="entry name" value="PurM-like, N-terminal domain"/>
    <property type="match status" value="2"/>
</dbReference>
<dbReference type="HAMAP" id="MF_00420">
    <property type="entry name" value="PurL_2"/>
    <property type="match status" value="1"/>
</dbReference>
<dbReference type="InterPro" id="IPR010074">
    <property type="entry name" value="PRibForGlyAmidine_synth_PurL"/>
</dbReference>
<dbReference type="InterPro" id="IPR041609">
    <property type="entry name" value="PurL_linker"/>
</dbReference>
<dbReference type="InterPro" id="IPR010918">
    <property type="entry name" value="PurM-like_C_dom"/>
</dbReference>
<dbReference type="InterPro" id="IPR036676">
    <property type="entry name" value="PurM-like_C_sf"/>
</dbReference>
<dbReference type="InterPro" id="IPR016188">
    <property type="entry name" value="PurM-like_N"/>
</dbReference>
<dbReference type="InterPro" id="IPR036921">
    <property type="entry name" value="PurM-like_N_sf"/>
</dbReference>
<dbReference type="NCBIfam" id="TIGR01736">
    <property type="entry name" value="FGAM_synth_II"/>
    <property type="match status" value="1"/>
</dbReference>
<dbReference type="NCBIfam" id="NF002290">
    <property type="entry name" value="PRK01213.1"/>
    <property type="match status" value="1"/>
</dbReference>
<dbReference type="PANTHER" id="PTHR43555">
    <property type="entry name" value="PHOSPHORIBOSYLFORMYLGLYCINAMIDINE SYNTHASE SUBUNIT PURL"/>
    <property type="match status" value="1"/>
</dbReference>
<dbReference type="PANTHER" id="PTHR43555:SF1">
    <property type="entry name" value="PHOSPHORIBOSYLFORMYLGLYCINAMIDINE SYNTHASE SUBUNIT PURL"/>
    <property type="match status" value="1"/>
</dbReference>
<dbReference type="Pfam" id="PF00586">
    <property type="entry name" value="AIRS"/>
    <property type="match status" value="2"/>
</dbReference>
<dbReference type="Pfam" id="PF02769">
    <property type="entry name" value="AIRS_C"/>
    <property type="match status" value="2"/>
</dbReference>
<dbReference type="Pfam" id="PF18072">
    <property type="entry name" value="FGAR-AT_linker"/>
    <property type="match status" value="1"/>
</dbReference>
<dbReference type="PIRSF" id="PIRSF001587">
    <property type="entry name" value="FGAM_synthase_II"/>
    <property type="match status" value="1"/>
</dbReference>
<dbReference type="SUPFAM" id="SSF56042">
    <property type="entry name" value="PurM C-terminal domain-like"/>
    <property type="match status" value="2"/>
</dbReference>
<dbReference type="SUPFAM" id="SSF55326">
    <property type="entry name" value="PurM N-terminal domain-like"/>
    <property type="match status" value="2"/>
</dbReference>
<organism>
    <name type="scientific">Thermococcus sibiricus (strain DSM 12597 / MM 739)</name>
    <dbReference type="NCBI Taxonomy" id="604354"/>
    <lineage>
        <taxon>Archaea</taxon>
        <taxon>Methanobacteriati</taxon>
        <taxon>Methanobacteriota</taxon>
        <taxon>Thermococci</taxon>
        <taxon>Thermococcales</taxon>
        <taxon>Thermococcaceae</taxon>
        <taxon>Thermococcus</taxon>
    </lineage>
</organism>
<reference key="1">
    <citation type="journal article" date="2009" name="Appl. Environ. Microbiol.">
        <title>Metabolic versatility and indigenous origin of the archaeon Thermococcus sibiricus, isolated from a siberian oil reservoir, as revealed by genome analysis.</title>
        <authorList>
            <person name="Mardanov A.V."/>
            <person name="Ravin N.V."/>
            <person name="Svetlitchnyi V.A."/>
            <person name="Beletsky A.V."/>
            <person name="Miroshnichenko M.L."/>
            <person name="Bonch-Osmolovskaya E.A."/>
            <person name="Skryabin K.G."/>
        </authorList>
    </citation>
    <scope>NUCLEOTIDE SEQUENCE [LARGE SCALE GENOMIC DNA]</scope>
    <source>
        <strain>DSM 12597 / MM 739</strain>
    </source>
</reference>
<feature type="chain" id="PRO_1000206051" description="Phosphoribosylformylglycinamidine synthase subunit PurL">
    <location>
        <begin position="1"/>
        <end position="713"/>
    </location>
</feature>
<feature type="active site" evidence="1">
    <location>
        <position position="32"/>
    </location>
</feature>
<feature type="active site" description="Proton acceptor" evidence="1">
    <location>
        <position position="78"/>
    </location>
</feature>
<feature type="binding site" evidence="1">
    <location>
        <position position="35"/>
    </location>
    <ligand>
        <name>ATP</name>
        <dbReference type="ChEBI" id="CHEBI:30616"/>
    </ligand>
</feature>
<feature type="binding site" evidence="1">
    <location>
        <position position="76"/>
    </location>
    <ligand>
        <name>Mg(2+)</name>
        <dbReference type="ChEBI" id="CHEBI:18420"/>
        <label>1</label>
    </ligand>
</feature>
<feature type="binding site" evidence="1">
    <location>
        <begin position="77"/>
        <end position="80"/>
    </location>
    <ligand>
        <name>substrate</name>
    </ligand>
</feature>
<feature type="binding site" evidence="1">
    <location>
        <position position="99"/>
    </location>
    <ligand>
        <name>substrate</name>
    </ligand>
</feature>
<feature type="binding site" evidence="1">
    <location>
        <position position="100"/>
    </location>
    <ligand>
        <name>Mg(2+)</name>
        <dbReference type="ChEBI" id="CHEBI:18420"/>
        <label>2</label>
    </ligand>
</feature>
<feature type="binding site" evidence="1">
    <location>
        <position position="224"/>
    </location>
    <ligand>
        <name>substrate</name>
    </ligand>
</feature>
<feature type="binding site" evidence="1">
    <location>
        <position position="252"/>
    </location>
    <ligand>
        <name>Mg(2+)</name>
        <dbReference type="ChEBI" id="CHEBI:18420"/>
        <label>2</label>
    </ligand>
</feature>
<feature type="binding site" evidence="1">
    <location>
        <begin position="296"/>
        <end position="298"/>
    </location>
    <ligand>
        <name>substrate</name>
    </ligand>
</feature>
<feature type="binding site" evidence="1">
    <location>
        <position position="471"/>
    </location>
    <ligand>
        <name>ATP</name>
        <dbReference type="ChEBI" id="CHEBI:30616"/>
    </ligand>
</feature>
<feature type="binding site" evidence="1">
    <location>
        <position position="508"/>
    </location>
    <ligand>
        <name>ATP</name>
        <dbReference type="ChEBI" id="CHEBI:30616"/>
    </ligand>
</feature>
<feature type="binding site" evidence="1">
    <location>
        <position position="509"/>
    </location>
    <ligand>
        <name>Mg(2+)</name>
        <dbReference type="ChEBI" id="CHEBI:18420"/>
        <label>1</label>
    </ligand>
</feature>
<feature type="binding site" evidence="1">
    <location>
        <position position="511"/>
    </location>
    <ligand>
        <name>substrate</name>
    </ligand>
</feature>
<comment type="function">
    <text evidence="1">Part of the phosphoribosylformylglycinamidine synthase complex involved in the purines biosynthetic pathway. Catalyzes the ATP-dependent conversion of formylglycinamide ribonucleotide (FGAR) and glutamine to yield formylglycinamidine ribonucleotide (FGAM) and glutamate. The FGAM synthase complex is composed of three subunits. PurQ produces an ammonia molecule by converting glutamine to glutamate. PurL transfers the ammonia molecule to FGAR to form FGAM in an ATP-dependent manner. PurS interacts with PurQ and PurL and is thought to assist in the transfer of the ammonia molecule from PurQ to PurL.</text>
</comment>
<comment type="catalytic activity">
    <reaction evidence="1">
        <text>N(2)-formyl-N(1)-(5-phospho-beta-D-ribosyl)glycinamide + L-glutamine + ATP + H2O = 2-formamido-N(1)-(5-O-phospho-beta-D-ribosyl)acetamidine + L-glutamate + ADP + phosphate + H(+)</text>
        <dbReference type="Rhea" id="RHEA:17129"/>
        <dbReference type="ChEBI" id="CHEBI:15377"/>
        <dbReference type="ChEBI" id="CHEBI:15378"/>
        <dbReference type="ChEBI" id="CHEBI:29985"/>
        <dbReference type="ChEBI" id="CHEBI:30616"/>
        <dbReference type="ChEBI" id="CHEBI:43474"/>
        <dbReference type="ChEBI" id="CHEBI:58359"/>
        <dbReference type="ChEBI" id="CHEBI:147286"/>
        <dbReference type="ChEBI" id="CHEBI:147287"/>
        <dbReference type="ChEBI" id="CHEBI:456216"/>
        <dbReference type="EC" id="6.3.5.3"/>
    </reaction>
</comment>
<comment type="pathway">
    <text evidence="1">Purine metabolism; IMP biosynthesis via de novo pathway; 5-amino-1-(5-phospho-D-ribosyl)imidazole from N(2)-formyl-N(1)-(5-phospho-D-ribosyl)glycinamide: step 1/2.</text>
</comment>
<comment type="subunit">
    <text evidence="1">Monomer. Part of the FGAM synthase complex composed of 1 PurL, 1 PurQ and 2 PurS subunits.</text>
</comment>
<comment type="subcellular location">
    <subcellularLocation>
        <location evidence="1">Cytoplasm</location>
    </subcellularLocation>
</comment>
<comment type="similarity">
    <text evidence="1">Belongs to the FGAMS family.</text>
</comment>